<accession>P00286</accession>
<name>AZUR_PSECL</name>
<evidence type="ECO:0000250" key="1"/>
<protein>
    <recommendedName>
        <fullName>Azurin</fullName>
    </recommendedName>
</protein>
<reference key="1">
    <citation type="book" date="1971" name="Developpements recents dans l'etude chimique de la structure des proteines">
        <editorList>
            <person name="Preverio A."/>
            <person name="Pechere J.-F."/>
            <person name="Coletti-preverio M.-A."/>
        </editorList>
        <authorList>
            <person name="Ambler R.P."/>
        </authorList>
    </citation>
    <scope>PROTEIN SEQUENCE</scope>
    <source>
        <strain>ATCC 17414 / NRRL B-1541 / Stanier D-35</strain>
    </source>
</reference>
<proteinExistence type="evidence at protein level"/>
<dbReference type="SMR" id="P00286"/>
<dbReference type="GO" id="GO:0042597">
    <property type="term" value="C:periplasmic space"/>
    <property type="evidence" value="ECO:0007669"/>
    <property type="project" value="UniProtKB-SubCell"/>
</dbReference>
<dbReference type="GO" id="GO:0005507">
    <property type="term" value="F:copper ion binding"/>
    <property type="evidence" value="ECO:0007669"/>
    <property type="project" value="InterPro"/>
</dbReference>
<dbReference type="GO" id="GO:0009055">
    <property type="term" value="F:electron transfer activity"/>
    <property type="evidence" value="ECO:0007669"/>
    <property type="project" value="InterPro"/>
</dbReference>
<dbReference type="CDD" id="cd13922">
    <property type="entry name" value="Azurin"/>
    <property type="match status" value="1"/>
</dbReference>
<dbReference type="FunFam" id="2.60.40.420:FF:000040">
    <property type="entry name" value="Azurin"/>
    <property type="match status" value="1"/>
</dbReference>
<dbReference type="Gene3D" id="2.60.40.420">
    <property type="entry name" value="Cupredoxins - blue copper proteins"/>
    <property type="match status" value="1"/>
</dbReference>
<dbReference type="InterPro" id="IPR014068">
    <property type="entry name" value="Azurin"/>
</dbReference>
<dbReference type="InterPro" id="IPR000923">
    <property type="entry name" value="BlueCu_1"/>
</dbReference>
<dbReference type="InterPro" id="IPR028871">
    <property type="entry name" value="BlueCu_1_BS"/>
</dbReference>
<dbReference type="InterPro" id="IPR050845">
    <property type="entry name" value="Cu-binding_ET"/>
</dbReference>
<dbReference type="InterPro" id="IPR008972">
    <property type="entry name" value="Cupredoxin"/>
</dbReference>
<dbReference type="NCBIfam" id="TIGR02695">
    <property type="entry name" value="azurin"/>
    <property type="match status" value="1"/>
</dbReference>
<dbReference type="PANTHER" id="PTHR38439">
    <property type="entry name" value="AURACYANIN-B"/>
    <property type="match status" value="1"/>
</dbReference>
<dbReference type="PANTHER" id="PTHR38439:SF2">
    <property type="entry name" value="OUTER MEMBRANE PROTEIN H.8"/>
    <property type="match status" value="1"/>
</dbReference>
<dbReference type="Pfam" id="PF00127">
    <property type="entry name" value="Copper-bind"/>
    <property type="match status" value="1"/>
</dbReference>
<dbReference type="SUPFAM" id="SSF49503">
    <property type="entry name" value="Cupredoxins"/>
    <property type="match status" value="1"/>
</dbReference>
<dbReference type="PROSITE" id="PS00196">
    <property type="entry name" value="COPPER_BLUE"/>
    <property type="match status" value="1"/>
</dbReference>
<feature type="chain" id="PRO_0000085546" description="Azurin">
    <location>
        <begin position="1"/>
        <end position="128"/>
    </location>
</feature>
<feature type="domain" description="Plastocyanin-like">
    <location>
        <begin position="1"/>
        <end position="128"/>
    </location>
</feature>
<feature type="binding site" evidence="1">
    <location>
        <position position="46"/>
    </location>
    <ligand>
        <name>Cu cation</name>
        <dbReference type="ChEBI" id="CHEBI:23378"/>
    </ligand>
</feature>
<feature type="binding site" evidence="1">
    <location>
        <position position="112"/>
    </location>
    <ligand>
        <name>Cu cation</name>
        <dbReference type="ChEBI" id="CHEBI:23378"/>
    </ligand>
</feature>
<feature type="binding site" evidence="1">
    <location>
        <position position="117"/>
    </location>
    <ligand>
        <name>Cu cation</name>
        <dbReference type="ChEBI" id="CHEBI:23378"/>
    </ligand>
</feature>
<feature type="binding site" evidence="1">
    <location>
        <position position="121"/>
    </location>
    <ligand>
        <name>Cu cation</name>
        <dbReference type="ChEBI" id="CHEBI:23378"/>
    </ligand>
</feature>
<feature type="disulfide bond" evidence="1">
    <location>
        <begin position="3"/>
        <end position="26"/>
    </location>
</feature>
<sequence length="128" mass="13743">AECKVDVDSTDQMSFNTKEITIDKSCKTFTVNLTHSGSLPKNVMGHNWVLSKSADMAGIATDGMAAGIDKDYLKPGDSRVIAHTKIIGSGEKDSVTFDVSKLTAGESYEFFCSFPGHNSMMKGAVVLK</sequence>
<comment type="function">
    <text>Transfers electrons from cytochrome c551 to cytochrome oxidase.</text>
</comment>
<comment type="subcellular location">
    <subcellularLocation>
        <location>Periplasm</location>
    </subcellularLocation>
</comment>
<keyword id="KW-0186">Copper</keyword>
<keyword id="KW-0903">Direct protein sequencing</keyword>
<keyword id="KW-1015">Disulfide bond</keyword>
<keyword id="KW-0249">Electron transport</keyword>
<keyword id="KW-0479">Metal-binding</keyword>
<keyword id="KW-0574">Periplasm</keyword>
<keyword id="KW-0813">Transport</keyword>
<organism>
    <name type="scientific">Pseudomonas chlororaphis</name>
    <name type="common">Pseudomonas aureofaciens</name>
    <dbReference type="NCBI Taxonomy" id="333"/>
    <lineage>
        <taxon>Bacteria</taxon>
        <taxon>Pseudomonadati</taxon>
        <taxon>Pseudomonadota</taxon>
        <taxon>Gammaproteobacteria</taxon>
        <taxon>Pseudomonadales</taxon>
        <taxon>Pseudomonadaceae</taxon>
        <taxon>Pseudomonas</taxon>
    </lineage>
</organism>